<gene>
    <name type="primary">orn</name>
    <name type="ordered locus">bbp_519</name>
</gene>
<dbReference type="EC" id="3.1.15.-"/>
<dbReference type="EMBL" id="AE016826">
    <property type="protein sequence ID" value="AAO27222.1"/>
    <property type="molecule type" value="Genomic_DNA"/>
</dbReference>
<dbReference type="SMR" id="Q89A34"/>
<dbReference type="KEGG" id="bab:bbp_519"/>
<dbReference type="eggNOG" id="COG1949">
    <property type="taxonomic scope" value="Bacteria"/>
</dbReference>
<dbReference type="HOGENOM" id="CLU_064761_2_0_6"/>
<dbReference type="OrthoDB" id="9801329at2"/>
<dbReference type="Proteomes" id="UP000000601">
    <property type="component" value="Chromosome"/>
</dbReference>
<dbReference type="GO" id="GO:0005737">
    <property type="term" value="C:cytoplasm"/>
    <property type="evidence" value="ECO:0007669"/>
    <property type="project" value="UniProtKB-SubCell"/>
</dbReference>
<dbReference type="GO" id="GO:0000175">
    <property type="term" value="F:3'-5'-RNA exonuclease activity"/>
    <property type="evidence" value="ECO:0007669"/>
    <property type="project" value="InterPro"/>
</dbReference>
<dbReference type="GO" id="GO:0003676">
    <property type="term" value="F:nucleic acid binding"/>
    <property type="evidence" value="ECO:0007669"/>
    <property type="project" value="InterPro"/>
</dbReference>
<dbReference type="GO" id="GO:0006259">
    <property type="term" value="P:DNA metabolic process"/>
    <property type="evidence" value="ECO:0007669"/>
    <property type="project" value="UniProtKB-ARBA"/>
</dbReference>
<dbReference type="CDD" id="cd06135">
    <property type="entry name" value="Orn"/>
    <property type="match status" value="1"/>
</dbReference>
<dbReference type="Gene3D" id="3.30.420.10">
    <property type="entry name" value="Ribonuclease H-like superfamily/Ribonuclease H"/>
    <property type="match status" value="1"/>
</dbReference>
<dbReference type="InterPro" id="IPR013520">
    <property type="entry name" value="Exonuclease_RNaseT/DNA_pol3"/>
</dbReference>
<dbReference type="InterPro" id="IPR022894">
    <property type="entry name" value="Oligoribonuclease"/>
</dbReference>
<dbReference type="InterPro" id="IPR012337">
    <property type="entry name" value="RNaseH-like_sf"/>
</dbReference>
<dbReference type="InterPro" id="IPR036397">
    <property type="entry name" value="RNaseH_sf"/>
</dbReference>
<dbReference type="NCBIfam" id="NF003765">
    <property type="entry name" value="PRK05359.1"/>
    <property type="match status" value="1"/>
</dbReference>
<dbReference type="PANTHER" id="PTHR11046">
    <property type="entry name" value="OLIGORIBONUCLEASE, MITOCHONDRIAL"/>
    <property type="match status" value="1"/>
</dbReference>
<dbReference type="PANTHER" id="PTHR11046:SF0">
    <property type="entry name" value="OLIGORIBONUCLEASE, MITOCHONDRIAL"/>
    <property type="match status" value="1"/>
</dbReference>
<dbReference type="Pfam" id="PF00929">
    <property type="entry name" value="RNase_T"/>
    <property type="match status" value="1"/>
</dbReference>
<dbReference type="SMART" id="SM00479">
    <property type="entry name" value="EXOIII"/>
    <property type="match status" value="1"/>
</dbReference>
<dbReference type="SUPFAM" id="SSF53098">
    <property type="entry name" value="Ribonuclease H-like"/>
    <property type="match status" value="1"/>
</dbReference>
<keyword id="KW-0963">Cytoplasm</keyword>
<keyword id="KW-0269">Exonuclease</keyword>
<keyword id="KW-0378">Hydrolase</keyword>
<keyword id="KW-0540">Nuclease</keyword>
<keyword id="KW-1185">Reference proteome</keyword>
<accession>Q89A34</accession>
<sequence>MNTDIKNLIWIDLEMTGLNPNIHKIIEIATLITDKNLKILSYGPVIAIYQNNHQLSFMDPWNNKMHTKNGLITRIKNSLYTEHLAEIKTITFLKKWVPKNTSPMCGNSISTDRQFLFKYMPTLEKYFHYRQIDVSTIKELALRWKPKIYNKLKKKTLIKH</sequence>
<evidence type="ECO:0000250" key="1"/>
<evidence type="ECO:0000255" key="2"/>
<evidence type="ECO:0000305" key="3"/>
<organism>
    <name type="scientific">Buchnera aphidicola subsp. Baizongia pistaciae (strain Bp)</name>
    <dbReference type="NCBI Taxonomy" id="224915"/>
    <lineage>
        <taxon>Bacteria</taxon>
        <taxon>Pseudomonadati</taxon>
        <taxon>Pseudomonadota</taxon>
        <taxon>Gammaproteobacteria</taxon>
        <taxon>Enterobacterales</taxon>
        <taxon>Erwiniaceae</taxon>
        <taxon>Buchnera</taxon>
    </lineage>
</organism>
<protein>
    <recommendedName>
        <fullName>Oligoribonuclease</fullName>
        <ecNumber>3.1.15.-</ecNumber>
    </recommendedName>
</protein>
<name>ORN_BUCBP</name>
<reference key="1">
    <citation type="journal article" date="2003" name="Proc. Natl. Acad. Sci. U.S.A.">
        <title>Reductive genome evolution in Buchnera aphidicola.</title>
        <authorList>
            <person name="van Ham R.C.H.J."/>
            <person name="Kamerbeek J."/>
            <person name="Palacios C."/>
            <person name="Rausell C."/>
            <person name="Abascal F."/>
            <person name="Bastolla U."/>
            <person name="Fernandez J.M."/>
            <person name="Jimenez L."/>
            <person name="Postigo M."/>
            <person name="Silva F.J."/>
            <person name="Tamames J."/>
            <person name="Viguera E."/>
            <person name="Latorre A."/>
            <person name="Valencia A."/>
            <person name="Moran F."/>
            <person name="Moya A."/>
        </authorList>
    </citation>
    <scope>NUCLEOTIDE SEQUENCE [LARGE SCALE GENOMIC DNA]</scope>
    <source>
        <strain>Bp</strain>
    </source>
</reference>
<feature type="chain" id="PRO_0000111024" description="Oligoribonuclease">
    <location>
        <begin position="1"/>
        <end position="160"/>
    </location>
</feature>
<feature type="domain" description="Exonuclease">
    <location>
        <begin position="8"/>
        <end position="158"/>
    </location>
</feature>
<feature type="active site" evidence="2">
    <location>
        <position position="129"/>
    </location>
</feature>
<comment type="function">
    <text evidence="1">3'-to-5' exoribonuclease specific for small oligoribonucleotides.</text>
</comment>
<comment type="subcellular location">
    <subcellularLocation>
        <location evidence="3">Cytoplasm</location>
    </subcellularLocation>
</comment>
<comment type="similarity">
    <text evidence="3">Belongs to the oligoribonuclease family.</text>
</comment>
<proteinExistence type="inferred from homology"/>